<organism>
    <name type="scientific">Lactococcus lactis subsp. cremoris (strain SK11)</name>
    <dbReference type="NCBI Taxonomy" id="272622"/>
    <lineage>
        <taxon>Bacteria</taxon>
        <taxon>Bacillati</taxon>
        <taxon>Bacillota</taxon>
        <taxon>Bacilli</taxon>
        <taxon>Lactobacillales</taxon>
        <taxon>Streptococcaceae</taxon>
        <taxon>Lactococcus</taxon>
        <taxon>Lactococcus cremoris subsp. cremoris</taxon>
    </lineage>
</organism>
<sequence length="168" mass="18002">MSTLLLEAAPNTVLGNIIVVSGAFIILLVLLRLFAWNAITSVFASRAKKISDDIDAAEANNKQAADLVKQRQAELAGSKEEAANIIQVANDTASQNRAKVLATANEEATSLKKRAQEDIEQERKEALNTVKGDVADISVQIAEKLIGQSLDASAQQELIDSYLAKLGE</sequence>
<reference key="1">
    <citation type="journal article" date="2006" name="Proc. Natl. Acad. Sci. U.S.A.">
        <title>Comparative genomics of the lactic acid bacteria.</title>
        <authorList>
            <person name="Makarova K.S."/>
            <person name="Slesarev A."/>
            <person name="Wolf Y.I."/>
            <person name="Sorokin A."/>
            <person name="Mirkin B."/>
            <person name="Koonin E.V."/>
            <person name="Pavlov A."/>
            <person name="Pavlova N."/>
            <person name="Karamychev V."/>
            <person name="Polouchine N."/>
            <person name="Shakhova V."/>
            <person name="Grigoriev I."/>
            <person name="Lou Y."/>
            <person name="Rohksar D."/>
            <person name="Lucas S."/>
            <person name="Huang K."/>
            <person name="Goodstein D.M."/>
            <person name="Hawkins T."/>
            <person name="Plengvidhya V."/>
            <person name="Welker D."/>
            <person name="Hughes J."/>
            <person name="Goh Y."/>
            <person name="Benson A."/>
            <person name="Baldwin K."/>
            <person name="Lee J.-H."/>
            <person name="Diaz-Muniz I."/>
            <person name="Dosti B."/>
            <person name="Smeianov V."/>
            <person name="Wechter W."/>
            <person name="Barabote R."/>
            <person name="Lorca G."/>
            <person name="Altermann E."/>
            <person name="Barrangou R."/>
            <person name="Ganesan B."/>
            <person name="Xie Y."/>
            <person name="Rawsthorne H."/>
            <person name="Tamir D."/>
            <person name="Parker C."/>
            <person name="Breidt F."/>
            <person name="Broadbent J.R."/>
            <person name="Hutkins R."/>
            <person name="O'Sullivan D."/>
            <person name="Steele J."/>
            <person name="Unlu G."/>
            <person name="Saier M.H. Jr."/>
            <person name="Klaenhammer T."/>
            <person name="Richardson P."/>
            <person name="Kozyavkin S."/>
            <person name="Weimer B.C."/>
            <person name="Mills D.A."/>
        </authorList>
    </citation>
    <scope>NUCLEOTIDE SEQUENCE [LARGE SCALE GENOMIC DNA]</scope>
    <source>
        <strain>SK11</strain>
    </source>
</reference>
<keyword id="KW-0066">ATP synthesis</keyword>
<keyword id="KW-1003">Cell membrane</keyword>
<keyword id="KW-0138">CF(0)</keyword>
<keyword id="KW-0375">Hydrogen ion transport</keyword>
<keyword id="KW-0406">Ion transport</keyword>
<keyword id="KW-0472">Membrane</keyword>
<keyword id="KW-0812">Transmembrane</keyword>
<keyword id="KW-1133">Transmembrane helix</keyword>
<keyword id="KW-0813">Transport</keyword>
<protein>
    <recommendedName>
        <fullName evidence="1">ATP synthase subunit b</fullName>
    </recommendedName>
    <alternativeName>
        <fullName evidence="1">ATP synthase F(0) sector subunit b</fullName>
    </alternativeName>
    <alternativeName>
        <fullName evidence="1">ATPase subunit I</fullName>
    </alternativeName>
    <alternativeName>
        <fullName evidence="1">F-type ATPase subunit b</fullName>
        <shortName evidence="1">F-ATPase subunit b</shortName>
    </alternativeName>
</protein>
<feature type="chain" id="PRO_0000368552" description="ATP synthase subunit b">
    <location>
        <begin position="1"/>
        <end position="168"/>
    </location>
</feature>
<feature type="transmembrane region" description="Helical" evidence="1">
    <location>
        <begin position="11"/>
        <end position="31"/>
    </location>
</feature>
<evidence type="ECO:0000255" key="1">
    <source>
        <dbReference type="HAMAP-Rule" id="MF_01398"/>
    </source>
</evidence>
<proteinExistence type="inferred from homology"/>
<name>ATPF_LACLS</name>
<comment type="function">
    <text evidence="1">F(1)F(0) ATP synthase produces ATP from ADP in the presence of a proton or sodium gradient. F-type ATPases consist of two structural domains, F(1) containing the extramembraneous catalytic core and F(0) containing the membrane proton channel, linked together by a central stalk and a peripheral stalk. During catalysis, ATP synthesis in the catalytic domain of F(1) is coupled via a rotary mechanism of the central stalk subunits to proton translocation.</text>
</comment>
<comment type="function">
    <text evidence="1">Component of the F(0) channel, it forms part of the peripheral stalk, linking F(1) to F(0).</text>
</comment>
<comment type="subunit">
    <text evidence="1">F-type ATPases have 2 components, F(1) - the catalytic core - and F(0) - the membrane proton channel. F(1) has five subunits: alpha(3), beta(3), gamma(1), delta(1), epsilon(1). F(0) has three main subunits: a(1), b(2) and c(10-14). The alpha and beta chains form an alternating ring which encloses part of the gamma chain. F(1) is attached to F(0) by a central stalk formed by the gamma and epsilon chains, while a peripheral stalk is formed by the delta and b chains.</text>
</comment>
<comment type="subcellular location">
    <subcellularLocation>
        <location evidence="1">Cell membrane</location>
        <topology evidence="1">Single-pass membrane protein</topology>
    </subcellularLocation>
</comment>
<comment type="similarity">
    <text evidence="1">Belongs to the ATPase B chain family.</text>
</comment>
<dbReference type="EMBL" id="CP000425">
    <property type="protein sequence ID" value="ABJ73421.1"/>
    <property type="molecule type" value="Genomic_DNA"/>
</dbReference>
<dbReference type="RefSeq" id="WP_010906128.1">
    <property type="nucleotide sequence ID" value="NC_008527.1"/>
</dbReference>
<dbReference type="SMR" id="Q02XA1"/>
<dbReference type="GeneID" id="89633969"/>
<dbReference type="KEGG" id="llc:LACR_1937"/>
<dbReference type="HOGENOM" id="CLU_079215_4_2_9"/>
<dbReference type="Proteomes" id="UP000000240">
    <property type="component" value="Chromosome"/>
</dbReference>
<dbReference type="GO" id="GO:0005886">
    <property type="term" value="C:plasma membrane"/>
    <property type="evidence" value="ECO:0007669"/>
    <property type="project" value="UniProtKB-SubCell"/>
</dbReference>
<dbReference type="GO" id="GO:0045259">
    <property type="term" value="C:proton-transporting ATP synthase complex"/>
    <property type="evidence" value="ECO:0007669"/>
    <property type="project" value="UniProtKB-KW"/>
</dbReference>
<dbReference type="GO" id="GO:0046933">
    <property type="term" value="F:proton-transporting ATP synthase activity, rotational mechanism"/>
    <property type="evidence" value="ECO:0007669"/>
    <property type="project" value="UniProtKB-UniRule"/>
</dbReference>
<dbReference type="GO" id="GO:0046961">
    <property type="term" value="F:proton-transporting ATPase activity, rotational mechanism"/>
    <property type="evidence" value="ECO:0007669"/>
    <property type="project" value="TreeGrafter"/>
</dbReference>
<dbReference type="CDD" id="cd06503">
    <property type="entry name" value="ATP-synt_Fo_b"/>
    <property type="match status" value="1"/>
</dbReference>
<dbReference type="Gene3D" id="1.20.5.620">
    <property type="entry name" value="F1F0 ATP synthase subunit B, membrane domain"/>
    <property type="match status" value="1"/>
</dbReference>
<dbReference type="HAMAP" id="MF_01398">
    <property type="entry name" value="ATP_synth_b_bprime"/>
    <property type="match status" value="1"/>
</dbReference>
<dbReference type="InterPro" id="IPR028987">
    <property type="entry name" value="ATP_synth_B-like_membr_sf"/>
</dbReference>
<dbReference type="InterPro" id="IPR002146">
    <property type="entry name" value="ATP_synth_b/b'su_bac/chlpt"/>
</dbReference>
<dbReference type="InterPro" id="IPR005864">
    <property type="entry name" value="ATP_synth_F0_bsu_bac"/>
</dbReference>
<dbReference type="InterPro" id="IPR050059">
    <property type="entry name" value="ATP_synthase_B_chain"/>
</dbReference>
<dbReference type="NCBIfam" id="TIGR01144">
    <property type="entry name" value="ATP_synt_b"/>
    <property type="match status" value="1"/>
</dbReference>
<dbReference type="PANTHER" id="PTHR33445:SF1">
    <property type="entry name" value="ATP SYNTHASE SUBUNIT B"/>
    <property type="match status" value="1"/>
</dbReference>
<dbReference type="PANTHER" id="PTHR33445">
    <property type="entry name" value="ATP SYNTHASE SUBUNIT B', CHLOROPLASTIC"/>
    <property type="match status" value="1"/>
</dbReference>
<dbReference type="Pfam" id="PF00430">
    <property type="entry name" value="ATP-synt_B"/>
    <property type="match status" value="1"/>
</dbReference>
<dbReference type="SUPFAM" id="SSF81573">
    <property type="entry name" value="F1F0 ATP synthase subunit B, membrane domain"/>
    <property type="match status" value="1"/>
</dbReference>
<gene>
    <name evidence="1" type="primary">atpF</name>
    <name type="ordered locus">LACR_1937</name>
</gene>
<accession>Q02XA1</accession>